<protein>
    <recommendedName>
        <fullName evidence="1">Mlc titration factor A</fullName>
    </recommendedName>
    <alternativeName>
        <fullName evidence="1">Probable zinc metallopeptidase MtfA</fullName>
        <ecNumber evidence="1">3.4.11.-</ecNumber>
    </alternativeName>
</protein>
<accession>Q8Z5Q0</accession>
<accession>Q7CAR2</accession>
<gene>
    <name evidence="1" type="primary">mtfA</name>
    <name type="ordered locus">STY2208</name>
    <name type="ordered locus">t0877</name>
</gene>
<organism>
    <name type="scientific">Salmonella typhi</name>
    <dbReference type="NCBI Taxonomy" id="90370"/>
    <lineage>
        <taxon>Bacteria</taxon>
        <taxon>Pseudomonadati</taxon>
        <taxon>Pseudomonadota</taxon>
        <taxon>Gammaproteobacteria</taxon>
        <taxon>Enterobacterales</taxon>
        <taxon>Enterobacteriaceae</taxon>
        <taxon>Salmonella</taxon>
    </lineage>
</organism>
<dbReference type="EC" id="3.4.11.-" evidence="1"/>
<dbReference type="EMBL" id="AE014613">
    <property type="protein sequence ID" value="AAO68557.1"/>
    <property type="molecule type" value="Genomic_DNA"/>
</dbReference>
<dbReference type="EMBL" id="AL513382">
    <property type="protein sequence ID" value="CAD05747.1"/>
    <property type="molecule type" value="Genomic_DNA"/>
</dbReference>
<dbReference type="RefSeq" id="NP_456559.1">
    <property type="nucleotide sequence ID" value="NC_003198.1"/>
</dbReference>
<dbReference type="RefSeq" id="WP_000598924.1">
    <property type="nucleotide sequence ID" value="NZ_WSUR01000042.1"/>
</dbReference>
<dbReference type="SMR" id="Q8Z5Q0"/>
<dbReference type="STRING" id="220341.gene:17586117"/>
<dbReference type="MEROPS" id="M90.001"/>
<dbReference type="KEGG" id="stt:t0877"/>
<dbReference type="KEGG" id="sty:STY2208"/>
<dbReference type="PATRIC" id="fig|220341.7.peg.2226"/>
<dbReference type="eggNOG" id="COG3228">
    <property type="taxonomic scope" value="Bacteria"/>
</dbReference>
<dbReference type="HOGENOM" id="CLU_063037_2_0_6"/>
<dbReference type="OMA" id="EHSGEAW"/>
<dbReference type="OrthoDB" id="9786424at2"/>
<dbReference type="Proteomes" id="UP000000541">
    <property type="component" value="Chromosome"/>
</dbReference>
<dbReference type="Proteomes" id="UP000002670">
    <property type="component" value="Chromosome"/>
</dbReference>
<dbReference type="GO" id="GO:0005829">
    <property type="term" value="C:cytosol"/>
    <property type="evidence" value="ECO:0007669"/>
    <property type="project" value="TreeGrafter"/>
</dbReference>
<dbReference type="GO" id="GO:0004177">
    <property type="term" value="F:aminopeptidase activity"/>
    <property type="evidence" value="ECO:0007669"/>
    <property type="project" value="UniProtKB-UniRule"/>
</dbReference>
<dbReference type="GO" id="GO:0008237">
    <property type="term" value="F:metallopeptidase activity"/>
    <property type="evidence" value="ECO:0007669"/>
    <property type="project" value="UniProtKB-UniRule"/>
</dbReference>
<dbReference type="GO" id="GO:0008270">
    <property type="term" value="F:zinc ion binding"/>
    <property type="evidence" value="ECO:0007669"/>
    <property type="project" value="UniProtKB-UniRule"/>
</dbReference>
<dbReference type="GO" id="GO:0006508">
    <property type="term" value="P:proteolysis"/>
    <property type="evidence" value="ECO:0007669"/>
    <property type="project" value="UniProtKB-KW"/>
</dbReference>
<dbReference type="CDD" id="cd20169">
    <property type="entry name" value="Peptidase_M90_mtfA"/>
    <property type="match status" value="1"/>
</dbReference>
<dbReference type="FunFam" id="1.10.472.150:FF:000001">
    <property type="entry name" value="Protein MtfA"/>
    <property type="match status" value="1"/>
</dbReference>
<dbReference type="FunFam" id="3.40.390.10:FF:000012">
    <property type="entry name" value="Protein MtfA"/>
    <property type="match status" value="1"/>
</dbReference>
<dbReference type="Gene3D" id="3.40.390.10">
    <property type="entry name" value="Collagenase (Catalytic Domain)"/>
    <property type="match status" value="1"/>
</dbReference>
<dbReference type="Gene3D" id="1.10.472.150">
    <property type="entry name" value="Glucose-regulated metallo-peptidase M90, N-terminal domain"/>
    <property type="match status" value="1"/>
</dbReference>
<dbReference type="HAMAP" id="MF_01593">
    <property type="entry name" value="MtfA"/>
    <property type="match status" value="1"/>
</dbReference>
<dbReference type="InterPro" id="IPR024079">
    <property type="entry name" value="MetalloPept_cat_dom_sf"/>
</dbReference>
<dbReference type="InterPro" id="IPR057256">
    <property type="entry name" value="MtfA_enterob"/>
</dbReference>
<dbReference type="InterPro" id="IPR010384">
    <property type="entry name" value="MtfA_fam"/>
</dbReference>
<dbReference type="InterPro" id="IPR042252">
    <property type="entry name" value="MtfA_N"/>
</dbReference>
<dbReference type="NCBIfam" id="NF011939">
    <property type="entry name" value="PRK15410.1"/>
    <property type="match status" value="1"/>
</dbReference>
<dbReference type="PANTHER" id="PTHR30164">
    <property type="entry name" value="MTFA PEPTIDASE"/>
    <property type="match status" value="1"/>
</dbReference>
<dbReference type="PANTHER" id="PTHR30164:SF2">
    <property type="entry name" value="PROTEIN MTFA"/>
    <property type="match status" value="1"/>
</dbReference>
<dbReference type="Pfam" id="PF06167">
    <property type="entry name" value="Peptidase_M90"/>
    <property type="match status" value="1"/>
</dbReference>
<dbReference type="SUPFAM" id="SSF55486">
    <property type="entry name" value="Metalloproteases ('zincins'), catalytic domain"/>
    <property type="match status" value="1"/>
</dbReference>
<reference key="1">
    <citation type="journal article" date="2001" name="Nature">
        <title>Complete genome sequence of a multiple drug resistant Salmonella enterica serovar Typhi CT18.</title>
        <authorList>
            <person name="Parkhill J."/>
            <person name="Dougan G."/>
            <person name="James K.D."/>
            <person name="Thomson N.R."/>
            <person name="Pickard D."/>
            <person name="Wain J."/>
            <person name="Churcher C.M."/>
            <person name="Mungall K.L."/>
            <person name="Bentley S.D."/>
            <person name="Holden M.T.G."/>
            <person name="Sebaihia M."/>
            <person name="Baker S."/>
            <person name="Basham D."/>
            <person name="Brooks K."/>
            <person name="Chillingworth T."/>
            <person name="Connerton P."/>
            <person name="Cronin A."/>
            <person name="Davis P."/>
            <person name="Davies R.M."/>
            <person name="Dowd L."/>
            <person name="White N."/>
            <person name="Farrar J."/>
            <person name="Feltwell T."/>
            <person name="Hamlin N."/>
            <person name="Haque A."/>
            <person name="Hien T.T."/>
            <person name="Holroyd S."/>
            <person name="Jagels K."/>
            <person name="Krogh A."/>
            <person name="Larsen T.S."/>
            <person name="Leather S."/>
            <person name="Moule S."/>
            <person name="O'Gaora P."/>
            <person name="Parry C."/>
            <person name="Quail M.A."/>
            <person name="Rutherford K.M."/>
            <person name="Simmonds M."/>
            <person name="Skelton J."/>
            <person name="Stevens K."/>
            <person name="Whitehead S."/>
            <person name="Barrell B.G."/>
        </authorList>
    </citation>
    <scope>NUCLEOTIDE SEQUENCE [LARGE SCALE GENOMIC DNA]</scope>
    <source>
        <strain>CT18</strain>
    </source>
</reference>
<reference key="2">
    <citation type="journal article" date="2003" name="J. Bacteriol.">
        <title>Comparative genomics of Salmonella enterica serovar Typhi strains Ty2 and CT18.</title>
        <authorList>
            <person name="Deng W."/>
            <person name="Liou S.-R."/>
            <person name="Plunkett G. III"/>
            <person name="Mayhew G.F."/>
            <person name="Rose D.J."/>
            <person name="Burland V."/>
            <person name="Kodoyianni V."/>
            <person name="Schwartz D.C."/>
            <person name="Blattner F.R."/>
        </authorList>
    </citation>
    <scope>NUCLEOTIDE SEQUENCE [LARGE SCALE GENOMIC DNA]</scope>
    <source>
        <strain>ATCC 700931 / Ty2</strain>
    </source>
</reference>
<keyword id="KW-0031">Aminopeptidase</keyword>
<keyword id="KW-0963">Cytoplasm</keyword>
<keyword id="KW-0378">Hydrolase</keyword>
<keyword id="KW-0479">Metal-binding</keyword>
<keyword id="KW-0482">Metalloprotease</keyword>
<keyword id="KW-0645">Protease</keyword>
<keyword id="KW-0862">Zinc</keyword>
<sequence length="265" mass="30180">MIKWPWKAQEITQNEDWPWDDALAIPLLVNLTAQEQARLIALAERFLQQKRLVALQGFELDSLKSARIALIFCLPILELGIEWLDGFHEVLIYPAPFVVDDEWEDDIGLVHSQRVVQSGQSWQQGPIILNWLDTQDSFDASGFNLIIHEVAHKLDMRNGDRASGIPFIPLRDVAGWEHDLHAAMNNIQDEIDLVGESAASIDAYAATDPAECFAVLSEYFFSAPELFAPRFPALWQRFCQFYRQDPSQRLRVSAAEGDYGEESEH</sequence>
<evidence type="ECO:0000255" key="1">
    <source>
        <dbReference type="HAMAP-Rule" id="MF_01593"/>
    </source>
</evidence>
<comment type="function">
    <text evidence="1">Involved in the modulation of the activity of the glucose-phosphotransferase system (glucose-PTS). Interacts with the transcriptional repressor Mlc, preventing its interaction with DNA and leading to the modulation of expression of genes regulated by Mlc, including ptsG, which encodes the PTS system glucose-specific EIICB component.</text>
</comment>
<comment type="function">
    <text evidence="1">Shows zinc-dependent metallopeptidase activity.</text>
</comment>
<comment type="cofactor">
    <cofactor evidence="1">
        <name>Zn(2+)</name>
        <dbReference type="ChEBI" id="CHEBI:29105"/>
    </cofactor>
    <text evidence="1">Binds 1 zinc ion per subunit.</text>
</comment>
<comment type="subunit">
    <text evidence="1">Interacts with Mlc.</text>
</comment>
<comment type="subcellular location">
    <subcellularLocation>
        <location evidence="1">Cytoplasm</location>
    </subcellularLocation>
</comment>
<comment type="similarity">
    <text evidence="1">Belongs to the MtfA family.</text>
</comment>
<name>MTFA_SALTI</name>
<feature type="chain" id="PRO_0000316321" description="Mlc titration factor A">
    <location>
        <begin position="1"/>
        <end position="265"/>
    </location>
</feature>
<feature type="binding site" evidence="1">
    <location>
        <position position="111"/>
    </location>
    <ligand>
        <name>Zn(2+)</name>
        <dbReference type="ChEBI" id="CHEBI:29105"/>
    </ligand>
</feature>
<feature type="binding site" evidence="1">
    <location>
        <position position="148"/>
    </location>
    <ligand>
        <name>Zn(2+)</name>
        <dbReference type="ChEBI" id="CHEBI:29105"/>
    </ligand>
</feature>
<feature type="binding site" evidence="1">
    <location>
        <position position="152"/>
    </location>
    <ligand>
        <name>Zn(2+)</name>
        <dbReference type="ChEBI" id="CHEBI:29105"/>
    </ligand>
</feature>
<feature type="binding site" evidence="1">
    <location>
        <position position="211"/>
    </location>
    <ligand>
        <name>Zn(2+)</name>
        <dbReference type="ChEBI" id="CHEBI:29105"/>
    </ligand>
</feature>
<proteinExistence type="inferred from homology"/>